<accession>B2S885</accession>
<evidence type="ECO:0000255" key="1">
    <source>
        <dbReference type="HAMAP-Rule" id="MF_00197"/>
    </source>
</evidence>
<evidence type="ECO:0000256" key="2">
    <source>
        <dbReference type="SAM" id="MobiDB-lite"/>
    </source>
</evidence>
<reference key="1">
    <citation type="journal article" date="2008" name="PLoS ONE">
        <title>Genome sequence of Brucella abortus vaccine strain S19 compared to virulent strains yields candidate virulence genes.</title>
        <authorList>
            <person name="Crasta O.R."/>
            <person name="Folkerts O."/>
            <person name="Fei Z."/>
            <person name="Mane S.P."/>
            <person name="Evans C."/>
            <person name="Martino-Catt S."/>
            <person name="Bricker B."/>
            <person name="Yu G."/>
            <person name="Du L."/>
            <person name="Sobral B.W."/>
        </authorList>
    </citation>
    <scope>NUCLEOTIDE SEQUENCE [LARGE SCALE GENOMIC DNA]</scope>
    <source>
        <strain>S19</strain>
    </source>
</reference>
<name>DAPF_BRUA1</name>
<sequence length="303" mass="32310">MATKAAFARMNGLGNQIIVADMRGRADSITSAAAIRLASDSETAFDQIMAIHDPRTPGTDYYIAIINCDGTQAQACGNGTRCVVQALAAETGRHAFTFETRAGILTATEHDDGLISVDMGTPRFDWQDIPLAQAVADTRKIELQVGPADAPVLHSPSIASMGNPHAVFWVDKDVWSYELDKFGPLLENHPIFPERANISIAHVTSSDTIDLRTWERGAGLTRACGSAACAAAVSAARTGRTGRKVTVNVPGGPLLIEWRDDDHVMMTGPAEWEFSGTFDPATGEWSRDTQGLQGSGNADRGAA</sequence>
<protein>
    <recommendedName>
        <fullName evidence="1">Diaminopimelate epimerase</fullName>
        <shortName evidence="1">DAP epimerase</shortName>
        <ecNumber evidence="1">5.1.1.7</ecNumber>
    </recommendedName>
    <alternativeName>
        <fullName evidence="1">PLP-independent amino acid racemase</fullName>
    </alternativeName>
</protein>
<gene>
    <name evidence="1" type="primary">dapF</name>
    <name type="ordered locus">BAbS19_I18120</name>
</gene>
<organism>
    <name type="scientific">Brucella abortus (strain S19)</name>
    <dbReference type="NCBI Taxonomy" id="430066"/>
    <lineage>
        <taxon>Bacteria</taxon>
        <taxon>Pseudomonadati</taxon>
        <taxon>Pseudomonadota</taxon>
        <taxon>Alphaproteobacteria</taxon>
        <taxon>Hyphomicrobiales</taxon>
        <taxon>Brucellaceae</taxon>
        <taxon>Brucella/Ochrobactrum group</taxon>
        <taxon>Brucella</taxon>
    </lineage>
</organism>
<keyword id="KW-0028">Amino-acid biosynthesis</keyword>
<keyword id="KW-0963">Cytoplasm</keyword>
<keyword id="KW-0413">Isomerase</keyword>
<keyword id="KW-0457">Lysine biosynthesis</keyword>
<feature type="chain" id="PRO_1000099221" description="Diaminopimelate epimerase">
    <location>
        <begin position="1"/>
        <end position="303"/>
    </location>
</feature>
<feature type="region of interest" description="Disordered" evidence="2">
    <location>
        <begin position="278"/>
        <end position="303"/>
    </location>
</feature>
<feature type="active site" description="Proton donor" evidence="1">
    <location>
        <position position="76"/>
    </location>
</feature>
<feature type="active site" description="Proton acceptor" evidence="1">
    <location>
        <position position="224"/>
    </location>
</feature>
<feature type="binding site" evidence="1">
    <location>
        <position position="15"/>
    </location>
    <ligand>
        <name>substrate</name>
    </ligand>
</feature>
<feature type="binding site" evidence="1">
    <location>
        <position position="47"/>
    </location>
    <ligand>
        <name>substrate</name>
    </ligand>
</feature>
<feature type="binding site" evidence="1">
    <location>
        <position position="67"/>
    </location>
    <ligand>
        <name>substrate</name>
    </ligand>
</feature>
<feature type="binding site" evidence="1">
    <location>
        <begin position="77"/>
        <end position="78"/>
    </location>
    <ligand>
        <name>substrate</name>
    </ligand>
</feature>
<feature type="binding site" evidence="1">
    <location>
        <position position="163"/>
    </location>
    <ligand>
        <name>substrate</name>
    </ligand>
</feature>
<feature type="binding site" evidence="1">
    <location>
        <position position="197"/>
    </location>
    <ligand>
        <name>substrate</name>
    </ligand>
</feature>
<feature type="binding site" evidence="1">
    <location>
        <begin position="215"/>
        <end position="216"/>
    </location>
    <ligand>
        <name>substrate</name>
    </ligand>
</feature>
<feature type="binding site" evidence="1">
    <location>
        <begin position="225"/>
        <end position="226"/>
    </location>
    <ligand>
        <name>substrate</name>
    </ligand>
</feature>
<feature type="site" description="Could be important to modulate the pK values of the two catalytic cysteine residues" evidence="1">
    <location>
        <position position="165"/>
    </location>
</feature>
<feature type="site" description="Could be important to modulate the pK values of the two catalytic cysteine residues" evidence="1">
    <location>
        <position position="215"/>
    </location>
</feature>
<dbReference type="EC" id="5.1.1.7" evidence="1"/>
<dbReference type="EMBL" id="CP000887">
    <property type="protein sequence ID" value="ACD73294.1"/>
    <property type="molecule type" value="Genomic_DNA"/>
</dbReference>
<dbReference type="RefSeq" id="WP_002966997.1">
    <property type="nucleotide sequence ID" value="NC_010742.1"/>
</dbReference>
<dbReference type="SMR" id="B2S885"/>
<dbReference type="GeneID" id="93017739"/>
<dbReference type="KEGG" id="bmc:BAbS19_I18120"/>
<dbReference type="HOGENOM" id="CLU_053306_1_0_5"/>
<dbReference type="UniPathway" id="UPA00034">
    <property type="reaction ID" value="UER00025"/>
</dbReference>
<dbReference type="Proteomes" id="UP000002565">
    <property type="component" value="Chromosome 1"/>
</dbReference>
<dbReference type="GO" id="GO:0005829">
    <property type="term" value="C:cytosol"/>
    <property type="evidence" value="ECO:0007669"/>
    <property type="project" value="TreeGrafter"/>
</dbReference>
<dbReference type="GO" id="GO:0008837">
    <property type="term" value="F:diaminopimelate epimerase activity"/>
    <property type="evidence" value="ECO:0007669"/>
    <property type="project" value="UniProtKB-UniRule"/>
</dbReference>
<dbReference type="GO" id="GO:0009089">
    <property type="term" value="P:lysine biosynthetic process via diaminopimelate"/>
    <property type="evidence" value="ECO:0007669"/>
    <property type="project" value="UniProtKB-UniRule"/>
</dbReference>
<dbReference type="Gene3D" id="3.10.310.10">
    <property type="entry name" value="Diaminopimelate Epimerase, Chain A, domain 1"/>
    <property type="match status" value="2"/>
</dbReference>
<dbReference type="HAMAP" id="MF_00197">
    <property type="entry name" value="DAP_epimerase"/>
    <property type="match status" value="1"/>
</dbReference>
<dbReference type="InterPro" id="IPR018510">
    <property type="entry name" value="DAP_epimerase_AS"/>
</dbReference>
<dbReference type="InterPro" id="IPR001653">
    <property type="entry name" value="DAP_epimerase_DapF"/>
</dbReference>
<dbReference type="NCBIfam" id="TIGR00652">
    <property type="entry name" value="DapF"/>
    <property type="match status" value="1"/>
</dbReference>
<dbReference type="PANTHER" id="PTHR31689:SF0">
    <property type="entry name" value="DIAMINOPIMELATE EPIMERASE"/>
    <property type="match status" value="1"/>
</dbReference>
<dbReference type="PANTHER" id="PTHR31689">
    <property type="entry name" value="DIAMINOPIMELATE EPIMERASE, CHLOROPLASTIC"/>
    <property type="match status" value="1"/>
</dbReference>
<dbReference type="Pfam" id="PF01678">
    <property type="entry name" value="DAP_epimerase"/>
    <property type="match status" value="2"/>
</dbReference>
<dbReference type="SUPFAM" id="SSF54506">
    <property type="entry name" value="Diaminopimelate epimerase-like"/>
    <property type="match status" value="2"/>
</dbReference>
<dbReference type="PROSITE" id="PS01326">
    <property type="entry name" value="DAP_EPIMERASE"/>
    <property type="match status" value="1"/>
</dbReference>
<comment type="function">
    <text evidence="1">Catalyzes the stereoinversion of LL-2,6-diaminopimelate (L,L-DAP) to meso-diaminopimelate (meso-DAP), a precursor of L-lysine and an essential component of the bacterial peptidoglycan.</text>
</comment>
<comment type="catalytic activity">
    <reaction evidence="1">
        <text>(2S,6S)-2,6-diaminopimelate = meso-2,6-diaminopimelate</text>
        <dbReference type="Rhea" id="RHEA:15393"/>
        <dbReference type="ChEBI" id="CHEBI:57609"/>
        <dbReference type="ChEBI" id="CHEBI:57791"/>
        <dbReference type="EC" id="5.1.1.7"/>
    </reaction>
</comment>
<comment type="pathway">
    <text evidence="1">Amino-acid biosynthesis; L-lysine biosynthesis via DAP pathway; DL-2,6-diaminopimelate from LL-2,6-diaminopimelate: step 1/1.</text>
</comment>
<comment type="subunit">
    <text evidence="1">Homodimer.</text>
</comment>
<comment type="subcellular location">
    <subcellularLocation>
        <location evidence="1">Cytoplasm</location>
    </subcellularLocation>
</comment>
<comment type="similarity">
    <text evidence="1">Belongs to the diaminopimelate epimerase family.</text>
</comment>
<proteinExistence type="inferred from homology"/>